<keyword id="KW-0067">ATP-binding</keyword>
<keyword id="KW-0414">Isoprene biosynthesis</keyword>
<keyword id="KW-0418">Kinase</keyword>
<keyword id="KW-0547">Nucleotide-binding</keyword>
<keyword id="KW-1185">Reference proteome</keyword>
<keyword id="KW-0808">Transferase</keyword>
<reference key="1">
    <citation type="journal article" date="2004" name="Nucleic Acids Res.">
        <title>Thermoadaptation trait revealed by the genome sequence of thermophilic Geobacillus kaustophilus.</title>
        <authorList>
            <person name="Takami H."/>
            <person name="Takaki Y."/>
            <person name="Chee G.-J."/>
            <person name="Nishi S."/>
            <person name="Shimamura S."/>
            <person name="Suzuki H."/>
            <person name="Matsui S."/>
            <person name="Uchiyama I."/>
        </authorList>
    </citation>
    <scope>NUCLEOTIDE SEQUENCE [LARGE SCALE GENOMIC DNA]</scope>
    <source>
        <strain>HTA426</strain>
    </source>
</reference>
<name>ISPE_GEOKA</name>
<accession>Q5L3V4</accession>
<evidence type="ECO:0000255" key="1">
    <source>
        <dbReference type="HAMAP-Rule" id="MF_00061"/>
    </source>
</evidence>
<sequence>MRLSIKAPAKINLSLDVLYKRPDGYHEVKMVMTTIDLADRIELVALPEEDAIRIVSQNRFVPDDCRNLAYQAAKLLKETFSIRQGVAISITKHIPVAAGLAGGSSNAAATLRGLNKLWQLGLTLDELAELGAKIGSDVAFCVYGGTALATGRGEIITPIPSPPPCWVVLAKPPIGVSTAEVYRNLELERVSHPDVDAMVRAIERQDYAAICRLVGNVLEEVTLKKYPEVAHIKEQMKRFGADAVLMSGSGPTVFGLIEHDSRMQRVYNGLRGFCDQVFAVRMLGERHSLD</sequence>
<feature type="chain" id="PRO_0000235094" description="4-diphosphocytidyl-2-C-methyl-D-erythritol kinase">
    <location>
        <begin position="1"/>
        <end position="290"/>
    </location>
</feature>
<feature type="active site" evidence="1">
    <location>
        <position position="10"/>
    </location>
</feature>
<feature type="active site" evidence="1">
    <location>
        <position position="137"/>
    </location>
</feature>
<feature type="binding site" evidence="1">
    <location>
        <begin position="95"/>
        <end position="105"/>
    </location>
    <ligand>
        <name>ATP</name>
        <dbReference type="ChEBI" id="CHEBI:30616"/>
    </ligand>
</feature>
<gene>
    <name evidence="1" type="primary">ispE</name>
    <name type="ordered locus">GK0039</name>
</gene>
<comment type="function">
    <text evidence="1">Catalyzes the phosphorylation of the position 2 hydroxy group of 4-diphosphocytidyl-2C-methyl-D-erythritol.</text>
</comment>
<comment type="catalytic activity">
    <reaction evidence="1">
        <text>4-CDP-2-C-methyl-D-erythritol + ATP = 4-CDP-2-C-methyl-D-erythritol 2-phosphate + ADP + H(+)</text>
        <dbReference type="Rhea" id="RHEA:18437"/>
        <dbReference type="ChEBI" id="CHEBI:15378"/>
        <dbReference type="ChEBI" id="CHEBI:30616"/>
        <dbReference type="ChEBI" id="CHEBI:57823"/>
        <dbReference type="ChEBI" id="CHEBI:57919"/>
        <dbReference type="ChEBI" id="CHEBI:456216"/>
        <dbReference type="EC" id="2.7.1.148"/>
    </reaction>
</comment>
<comment type="pathway">
    <text evidence="1">Isoprenoid biosynthesis; isopentenyl diphosphate biosynthesis via DXP pathway; isopentenyl diphosphate from 1-deoxy-D-xylulose 5-phosphate: step 3/6.</text>
</comment>
<comment type="similarity">
    <text evidence="1">Belongs to the GHMP kinase family. IspE subfamily.</text>
</comment>
<protein>
    <recommendedName>
        <fullName evidence="1">4-diphosphocytidyl-2-C-methyl-D-erythritol kinase</fullName>
        <shortName evidence="1">CMK</shortName>
        <ecNumber evidence="1">2.7.1.148</ecNumber>
    </recommendedName>
    <alternativeName>
        <fullName evidence="1">4-(cytidine-5'-diphospho)-2-C-methyl-D-erythritol kinase</fullName>
    </alternativeName>
</protein>
<organism>
    <name type="scientific">Geobacillus kaustophilus (strain HTA426)</name>
    <dbReference type="NCBI Taxonomy" id="235909"/>
    <lineage>
        <taxon>Bacteria</taxon>
        <taxon>Bacillati</taxon>
        <taxon>Bacillota</taxon>
        <taxon>Bacilli</taxon>
        <taxon>Bacillales</taxon>
        <taxon>Anoxybacillaceae</taxon>
        <taxon>Geobacillus</taxon>
        <taxon>Geobacillus thermoleovorans group</taxon>
    </lineage>
</organism>
<dbReference type="EC" id="2.7.1.148" evidence="1"/>
<dbReference type="EMBL" id="BA000043">
    <property type="protein sequence ID" value="BAD74324.1"/>
    <property type="molecule type" value="Genomic_DNA"/>
</dbReference>
<dbReference type="RefSeq" id="WP_011229555.1">
    <property type="nucleotide sequence ID" value="NC_006510.1"/>
</dbReference>
<dbReference type="SMR" id="Q5L3V4"/>
<dbReference type="STRING" id="235909.GK0039"/>
<dbReference type="KEGG" id="gka:GK0039"/>
<dbReference type="PATRIC" id="fig|235909.7.peg.86"/>
<dbReference type="eggNOG" id="COG1947">
    <property type="taxonomic scope" value="Bacteria"/>
</dbReference>
<dbReference type="HOGENOM" id="CLU_053057_1_1_9"/>
<dbReference type="UniPathway" id="UPA00056">
    <property type="reaction ID" value="UER00094"/>
</dbReference>
<dbReference type="Proteomes" id="UP000001172">
    <property type="component" value="Chromosome"/>
</dbReference>
<dbReference type="GO" id="GO:0050515">
    <property type="term" value="F:4-(cytidine 5'-diphospho)-2-C-methyl-D-erythritol kinase activity"/>
    <property type="evidence" value="ECO:0007669"/>
    <property type="project" value="UniProtKB-UniRule"/>
</dbReference>
<dbReference type="GO" id="GO:0005524">
    <property type="term" value="F:ATP binding"/>
    <property type="evidence" value="ECO:0007669"/>
    <property type="project" value="UniProtKB-UniRule"/>
</dbReference>
<dbReference type="GO" id="GO:0019288">
    <property type="term" value="P:isopentenyl diphosphate biosynthetic process, methylerythritol 4-phosphate pathway"/>
    <property type="evidence" value="ECO:0007669"/>
    <property type="project" value="UniProtKB-UniRule"/>
</dbReference>
<dbReference type="GO" id="GO:0016114">
    <property type="term" value="P:terpenoid biosynthetic process"/>
    <property type="evidence" value="ECO:0007669"/>
    <property type="project" value="InterPro"/>
</dbReference>
<dbReference type="FunFam" id="3.30.230.10:FF:000029">
    <property type="entry name" value="4-diphosphocytidyl-2-C-methyl-D-erythritol kinase"/>
    <property type="match status" value="1"/>
</dbReference>
<dbReference type="FunFam" id="3.30.70.890:FF:000006">
    <property type="entry name" value="4-diphosphocytidyl-2-C-methyl-D-erythritol kinase"/>
    <property type="match status" value="1"/>
</dbReference>
<dbReference type="Gene3D" id="3.30.230.10">
    <property type="match status" value="1"/>
</dbReference>
<dbReference type="Gene3D" id="3.30.70.890">
    <property type="entry name" value="GHMP kinase, C-terminal domain"/>
    <property type="match status" value="1"/>
</dbReference>
<dbReference type="HAMAP" id="MF_00061">
    <property type="entry name" value="IspE"/>
    <property type="match status" value="1"/>
</dbReference>
<dbReference type="InterPro" id="IPR013750">
    <property type="entry name" value="GHMP_kinase_C_dom"/>
</dbReference>
<dbReference type="InterPro" id="IPR036554">
    <property type="entry name" value="GHMP_kinase_C_sf"/>
</dbReference>
<dbReference type="InterPro" id="IPR006204">
    <property type="entry name" value="GHMP_kinase_N_dom"/>
</dbReference>
<dbReference type="InterPro" id="IPR004424">
    <property type="entry name" value="IspE"/>
</dbReference>
<dbReference type="InterPro" id="IPR020568">
    <property type="entry name" value="Ribosomal_Su5_D2-typ_SF"/>
</dbReference>
<dbReference type="InterPro" id="IPR014721">
    <property type="entry name" value="Ribsml_uS5_D2-typ_fold_subgr"/>
</dbReference>
<dbReference type="NCBIfam" id="TIGR00154">
    <property type="entry name" value="ispE"/>
    <property type="match status" value="1"/>
</dbReference>
<dbReference type="PANTHER" id="PTHR43527">
    <property type="entry name" value="4-DIPHOSPHOCYTIDYL-2-C-METHYL-D-ERYTHRITOL KINASE, CHLOROPLASTIC"/>
    <property type="match status" value="1"/>
</dbReference>
<dbReference type="PANTHER" id="PTHR43527:SF2">
    <property type="entry name" value="4-DIPHOSPHOCYTIDYL-2-C-METHYL-D-ERYTHRITOL KINASE, CHLOROPLASTIC"/>
    <property type="match status" value="1"/>
</dbReference>
<dbReference type="Pfam" id="PF08544">
    <property type="entry name" value="GHMP_kinases_C"/>
    <property type="match status" value="1"/>
</dbReference>
<dbReference type="Pfam" id="PF00288">
    <property type="entry name" value="GHMP_kinases_N"/>
    <property type="match status" value="1"/>
</dbReference>
<dbReference type="PIRSF" id="PIRSF010376">
    <property type="entry name" value="IspE"/>
    <property type="match status" value="1"/>
</dbReference>
<dbReference type="SUPFAM" id="SSF55060">
    <property type="entry name" value="GHMP Kinase, C-terminal domain"/>
    <property type="match status" value="1"/>
</dbReference>
<dbReference type="SUPFAM" id="SSF54211">
    <property type="entry name" value="Ribosomal protein S5 domain 2-like"/>
    <property type="match status" value="1"/>
</dbReference>
<proteinExistence type="inferred from homology"/>